<organism>
    <name type="scientific">Buchnera aphidicola subsp. Acyrthosiphon pisum (strain Tuc7)</name>
    <dbReference type="NCBI Taxonomy" id="561501"/>
    <lineage>
        <taxon>Bacteria</taxon>
        <taxon>Pseudomonadati</taxon>
        <taxon>Pseudomonadota</taxon>
        <taxon>Gammaproteobacteria</taxon>
        <taxon>Enterobacterales</taxon>
        <taxon>Erwiniaceae</taxon>
        <taxon>Buchnera</taxon>
    </lineage>
</organism>
<protein>
    <recommendedName>
        <fullName evidence="1">CTP synthase</fullName>
        <ecNumber evidence="1">6.3.4.2</ecNumber>
    </recommendedName>
    <alternativeName>
        <fullName evidence="1">Cytidine 5'-triphosphate synthase</fullName>
    </alternativeName>
    <alternativeName>
        <fullName evidence="1">Cytidine triphosphate synthetase</fullName>
        <shortName evidence="1">CTP synthetase</shortName>
        <shortName evidence="1">CTPS</shortName>
    </alternativeName>
    <alternativeName>
        <fullName evidence="1">UTP--ammonia ligase</fullName>
    </alternativeName>
</protein>
<gene>
    <name evidence="1" type="primary">pyrG</name>
    <name type="ordered locus">BUAPTUC7_410</name>
</gene>
<keyword id="KW-0067">ATP-binding</keyword>
<keyword id="KW-0315">Glutamine amidotransferase</keyword>
<keyword id="KW-0436">Ligase</keyword>
<keyword id="KW-0460">Magnesium</keyword>
<keyword id="KW-0479">Metal-binding</keyword>
<keyword id="KW-0547">Nucleotide-binding</keyword>
<keyword id="KW-0665">Pyrimidine biosynthesis</keyword>
<proteinExistence type="inferred from homology"/>
<accession>B8D7U6</accession>
<evidence type="ECO:0000255" key="1">
    <source>
        <dbReference type="HAMAP-Rule" id="MF_01227"/>
    </source>
</evidence>
<sequence length="545" mass="61272">MTKNYIFITGGVVSSLGKGIAAASLGAILKARNLNITIIKLDPYINVDPGTISPIQHGEVFVTEDGAETDLDLGHYERFIHTKMTFLNNFTTGGVYSQVLKKERRGDYLGATIQVIPHITNAIKERIILCSKNSNIILVEIGGTVGDIESLPFLEAIRQMAVDIGRKNVIYIHLTLVPYIATAGEIKTKPTQHSVKQLLSIGIQPDILICRSEKTVPLHERKKIALFCNVPVDAVISLKDVNSIYKIPKLLKNQKLDDYICNYFKLNVPEADLQEWEEVIYAEKNFNNTIVIGIIGKYIKLPDAYKSVMEALKHAGFKNKIKVDIQLINSQEVENKNFQILKNLNGILIPGGFGDRGIVGKLLSIQYARENHIPYFGICLGMQIAIIEFAQNVVGIKEANSTEFDPQCKYPIIDLIKNRPNNSSKNYNKIENRINLGGTMRLGSQPCKLSANSLSRKLYNQEIIIERHRHRYEVNNLLFKKIEAAGLQVTGRSQKNNVVEIIELSNHPWFLACQFHPEFTSTPRDGHPLFIDFIKSAGKHKKNFI</sequence>
<dbReference type="EC" id="6.3.4.2" evidence="1"/>
<dbReference type="EMBL" id="CP001158">
    <property type="protein sequence ID" value="ACL30211.1"/>
    <property type="molecule type" value="Genomic_DNA"/>
</dbReference>
<dbReference type="RefSeq" id="WP_012619538.1">
    <property type="nucleotide sequence ID" value="NC_011834.1"/>
</dbReference>
<dbReference type="SMR" id="B8D7U6"/>
<dbReference type="KEGG" id="bau:BUAPTUC7_410"/>
<dbReference type="HOGENOM" id="CLU_011675_5_0_6"/>
<dbReference type="UniPathway" id="UPA00159">
    <property type="reaction ID" value="UER00277"/>
</dbReference>
<dbReference type="GO" id="GO:0005829">
    <property type="term" value="C:cytosol"/>
    <property type="evidence" value="ECO:0007669"/>
    <property type="project" value="TreeGrafter"/>
</dbReference>
<dbReference type="GO" id="GO:0005524">
    <property type="term" value="F:ATP binding"/>
    <property type="evidence" value="ECO:0007669"/>
    <property type="project" value="UniProtKB-KW"/>
</dbReference>
<dbReference type="GO" id="GO:0003883">
    <property type="term" value="F:CTP synthase activity"/>
    <property type="evidence" value="ECO:0007669"/>
    <property type="project" value="UniProtKB-UniRule"/>
</dbReference>
<dbReference type="GO" id="GO:0004359">
    <property type="term" value="F:glutaminase activity"/>
    <property type="evidence" value="ECO:0007669"/>
    <property type="project" value="RHEA"/>
</dbReference>
<dbReference type="GO" id="GO:0042802">
    <property type="term" value="F:identical protein binding"/>
    <property type="evidence" value="ECO:0007669"/>
    <property type="project" value="TreeGrafter"/>
</dbReference>
<dbReference type="GO" id="GO:0046872">
    <property type="term" value="F:metal ion binding"/>
    <property type="evidence" value="ECO:0007669"/>
    <property type="project" value="UniProtKB-KW"/>
</dbReference>
<dbReference type="GO" id="GO:0044210">
    <property type="term" value="P:'de novo' CTP biosynthetic process"/>
    <property type="evidence" value="ECO:0007669"/>
    <property type="project" value="UniProtKB-UniRule"/>
</dbReference>
<dbReference type="GO" id="GO:0019856">
    <property type="term" value="P:pyrimidine nucleobase biosynthetic process"/>
    <property type="evidence" value="ECO:0007669"/>
    <property type="project" value="TreeGrafter"/>
</dbReference>
<dbReference type="CDD" id="cd03113">
    <property type="entry name" value="CTPS_N"/>
    <property type="match status" value="1"/>
</dbReference>
<dbReference type="CDD" id="cd01746">
    <property type="entry name" value="GATase1_CTP_Synthase"/>
    <property type="match status" value="1"/>
</dbReference>
<dbReference type="FunFam" id="3.40.50.300:FF:000009">
    <property type="entry name" value="CTP synthase"/>
    <property type="match status" value="1"/>
</dbReference>
<dbReference type="FunFam" id="3.40.50.880:FF:000002">
    <property type="entry name" value="CTP synthase"/>
    <property type="match status" value="1"/>
</dbReference>
<dbReference type="Gene3D" id="3.40.50.880">
    <property type="match status" value="1"/>
</dbReference>
<dbReference type="Gene3D" id="3.40.50.300">
    <property type="entry name" value="P-loop containing nucleotide triphosphate hydrolases"/>
    <property type="match status" value="1"/>
</dbReference>
<dbReference type="HAMAP" id="MF_01227">
    <property type="entry name" value="PyrG"/>
    <property type="match status" value="1"/>
</dbReference>
<dbReference type="InterPro" id="IPR029062">
    <property type="entry name" value="Class_I_gatase-like"/>
</dbReference>
<dbReference type="InterPro" id="IPR004468">
    <property type="entry name" value="CTP_synthase"/>
</dbReference>
<dbReference type="InterPro" id="IPR017456">
    <property type="entry name" value="CTP_synthase_N"/>
</dbReference>
<dbReference type="InterPro" id="IPR017926">
    <property type="entry name" value="GATASE"/>
</dbReference>
<dbReference type="InterPro" id="IPR033828">
    <property type="entry name" value="GATase1_CTP_Synthase"/>
</dbReference>
<dbReference type="InterPro" id="IPR027417">
    <property type="entry name" value="P-loop_NTPase"/>
</dbReference>
<dbReference type="NCBIfam" id="NF003792">
    <property type="entry name" value="PRK05380.1"/>
    <property type="match status" value="1"/>
</dbReference>
<dbReference type="NCBIfam" id="TIGR00337">
    <property type="entry name" value="PyrG"/>
    <property type="match status" value="1"/>
</dbReference>
<dbReference type="PANTHER" id="PTHR11550">
    <property type="entry name" value="CTP SYNTHASE"/>
    <property type="match status" value="1"/>
</dbReference>
<dbReference type="PANTHER" id="PTHR11550:SF0">
    <property type="entry name" value="CTP SYNTHASE-RELATED"/>
    <property type="match status" value="1"/>
</dbReference>
<dbReference type="Pfam" id="PF06418">
    <property type="entry name" value="CTP_synth_N"/>
    <property type="match status" value="1"/>
</dbReference>
<dbReference type="Pfam" id="PF00117">
    <property type="entry name" value="GATase"/>
    <property type="match status" value="1"/>
</dbReference>
<dbReference type="SUPFAM" id="SSF52317">
    <property type="entry name" value="Class I glutamine amidotransferase-like"/>
    <property type="match status" value="1"/>
</dbReference>
<dbReference type="SUPFAM" id="SSF52540">
    <property type="entry name" value="P-loop containing nucleoside triphosphate hydrolases"/>
    <property type="match status" value="1"/>
</dbReference>
<dbReference type="PROSITE" id="PS51273">
    <property type="entry name" value="GATASE_TYPE_1"/>
    <property type="match status" value="1"/>
</dbReference>
<comment type="function">
    <text evidence="1">Catalyzes the ATP-dependent amination of UTP to CTP with either L-glutamine or ammonia as the source of nitrogen. Regulates intracellular CTP levels through interactions with the four ribonucleotide triphosphates.</text>
</comment>
<comment type="catalytic activity">
    <reaction evidence="1">
        <text>UTP + L-glutamine + ATP + H2O = CTP + L-glutamate + ADP + phosphate + 2 H(+)</text>
        <dbReference type="Rhea" id="RHEA:26426"/>
        <dbReference type="ChEBI" id="CHEBI:15377"/>
        <dbReference type="ChEBI" id="CHEBI:15378"/>
        <dbReference type="ChEBI" id="CHEBI:29985"/>
        <dbReference type="ChEBI" id="CHEBI:30616"/>
        <dbReference type="ChEBI" id="CHEBI:37563"/>
        <dbReference type="ChEBI" id="CHEBI:43474"/>
        <dbReference type="ChEBI" id="CHEBI:46398"/>
        <dbReference type="ChEBI" id="CHEBI:58359"/>
        <dbReference type="ChEBI" id="CHEBI:456216"/>
        <dbReference type="EC" id="6.3.4.2"/>
    </reaction>
</comment>
<comment type="catalytic activity">
    <reaction evidence="1">
        <text>L-glutamine + H2O = L-glutamate + NH4(+)</text>
        <dbReference type="Rhea" id="RHEA:15889"/>
        <dbReference type="ChEBI" id="CHEBI:15377"/>
        <dbReference type="ChEBI" id="CHEBI:28938"/>
        <dbReference type="ChEBI" id="CHEBI:29985"/>
        <dbReference type="ChEBI" id="CHEBI:58359"/>
    </reaction>
</comment>
<comment type="catalytic activity">
    <reaction evidence="1">
        <text>UTP + NH4(+) + ATP = CTP + ADP + phosphate + 2 H(+)</text>
        <dbReference type="Rhea" id="RHEA:16597"/>
        <dbReference type="ChEBI" id="CHEBI:15378"/>
        <dbReference type="ChEBI" id="CHEBI:28938"/>
        <dbReference type="ChEBI" id="CHEBI:30616"/>
        <dbReference type="ChEBI" id="CHEBI:37563"/>
        <dbReference type="ChEBI" id="CHEBI:43474"/>
        <dbReference type="ChEBI" id="CHEBI:46398"/>
        <dbReference type="ChEBI" id="CHEBI:456216"/>
    </reaction>
</comment>
<comment type="activity regulation">
    <text evidence="1">Allosterically activated by GTP, when glutamine is the substrate; GTP has no effect on the reaction when ammonia is the substrate. The allosteric effector GTP functions by stabilizing the protein conformation that binds the tetrahedral intermediate(s) formed during glutamine hydrolysis. Inhibited by the product CTP, via allosteric rather than competitive inhibition.</text>
</comment>
<comment type="pathway">
    <text evidence="1">Pyrimidine metabolism; CTP biosynthesis via de novo pathway; CTP from UDP: step 2/2.</text>
</comment>
<comment type="subunit">
    <text evidence="1">Homotetramer.</text>
</comment>
<comment type="miscellaneous">
    <text evidence="1">CTPSs have evolved a hybrid strategy for distinguishing between UTP and CTP. The overlapping regions of the product feedback inhibitory and substrate sites recognize a common feature in both compounds, the triphosphate moiety. To differentiate isosteric substrate and product pyrimidine rings, an additional pocket far from the expected kinase/ligase catalytic site, specifically recognizes the cytosine and ribose portions of the product inhibitor.</text>
</comment>
<comment type="similarity">
    <text evidence="1">Belongs to the CTP synthase family.</text>
</comment>
<feature type="chain" id="PRO_1000164932" description="CTP synthase">
    <location>
        <begin position="1"/>
        <end position="545"/>
    </location>
</feature>
<feature type="domain" description="Glutamine amidotransferase type-1" evidence="1">
    <location>
        <begin position="291"/>
        <end position="543"/>
    </location>
</feature>
<feature type="region of interest" description="Amidoligase domain" evidence="1">
    <location>
        <begin position="1"/>
        <end position="266"/>
    </location>
</feature>
<feature type="active site" description="Nucleophile; for glutamine hydrolysis" evidence="1">
    <location>
        <position position="379"/>
    </location>
</feature>
<feature type="active site" evidence="1">
    <location>
        <position position="516"/>
    </location>
</feature>
<feature type="active site" evidence="1">
    <location>
        <position position="518"/>
    </location>
</feature>
<feature type="binding site" evidence="1">
    <location>
        <position position="14"/>
    </location>
    <ligand>
        <name>CTP</name>
        <dbReference type="ChEBI" id="CHEBI:37563"/>
        <note>allosteric inhibitor</note>
    </ligand>
</feature>
<feature type="binding site" evidence="1">
    <location>
        <position position="14"/>
    </location>
    <ligand>
        <name>UTP</name>
        <dbReference type="ChEBI" id="CHEBI:46398"/>
    </ligand>
</feature>
<feature type="binding site" evidence="1">
    <location>
        <begin position="15"/>
        <end position="20"/>
    </location>
    <ligand>
        <name>ATP</name>
        <dbReference type="ChEBI" id="CHEBI:30616"/>
    </ligand>
</feature>
<feature type="binding site" evidence="1">
    <location>
        <position position="72"/>
    </location>
    <ligand>
        <name>ATP</name>
        <dbReference type="ChEBI" id="CHEBI:30616"/>
    </ligand>
</feature>
<feature type="binding site" evidence="1">
    <location>
        <position position="72"/>
    </location>
    <ligand>
        <name>Mg(2+)</name>
        <dbReference type="ChEBI" id="CHEBI:18420"/>
    </ligand>
</feature>
<feature type="binding site" evidence="1">
    <location>
        <position position="140"/>
    </location>
    <ligand>
        <name>Mg(2+)</name>
        <dbReference type="ChEBI" id="CHEBI:18420"/>
    </ligand>
</feature>
<feature type="binding site" evidence="1">
    <location>
        <begin position="147"/>
        <end position="149"/>
    </location>
    <ligand>
        <name>CTP</name>
        <dbReference type="ChEBI" id="CHEBI:37563"/>
        <note>allosteric inhibitor</note>
    </ligand>
</feature>
<feature type="binding site" evidence="1">
    <location>
        <begin position="187"/>
        <end position="192"/>
    </location>
    <ligand>
        <name>CTP</name>
        <dbReference type="ChEBI" id="CHEBI:37563"/>
        <note>allosteric inhibitor</note>
    </ligand>
</feature>
<feature type="binding site" evidence="1">
    <location>
        <begin position="187"/>
        <end position="192"/>
    </location>
    <ligand>
        <name>UTP</name>
        <dbReference type="ChEBI" id="CHEBI:46398"/>
    </ligand>
</feature>
<feature type="binding site" evidence="1">
    <location>
        <position position="223"/>
    </location>
    <ligand>
        <name>CTP</name>
        <dbReference type="ChEBI" id="CHEBI:37563"/>
        <note>allosteric inhibitor</note>
    </ligand>
</feature>
<feature type="binding site" evidence="1">
    <location>
        <position position="223"/>
    </location>
    <ligand>
        <name>UTP</name>
        <dbReference type="ChEBI" id="CHEBI:46398"/>
    </ligand>
</feature>
<feature type="binding site" evidence="1">
    <location>
        <begin position="239"/>
        <end position="241"/>
    </location>
    <ligand>
        <name>ATP</name>
        <dbReference type="ChEBI" id="CHEBI:30616"/>
    </ligand>
</feature>
<feature type="binding site" evidence="1">
    <location>
        <position position="352"/>
    </location>
    <ligand>
        <name>L-glutamine</name>
        <dbReference type="ChEBI" id="CHEBI:58359"/>
    </ligand>
</feature>
<feature type="binding site" evidence="1">
    <location>
        <begin position="380"/>
        <end position="383"/>
    </location>
    <ligand>
        <name>L-glutamine</name>
        <dbReference type="ChEBI" id="CHEBI:58359"/>
    </ligand>
</feature>
<feature type="binding site" evidence="1">
    <location>
        <position position="403"/>
    </location>
    <ligand>
        <name>L-glutamine</name>
        <dbReference type="ChEBI" id="CHEBI:58359"/>
    </ligand>
</feature>
<feature type="binding site" evidence="1">
    <location>
        <position position="471"/>
    </location>
    <ligand>
        <name>L-glutamine</name>
        <dbReference type="ChEBI" id="CHEBI:58359"/>
    </ligand>
</feature>
<name>PYRG_BUCAT</name>
<reference key="1">
    <citation type="journal article" date="2009" name="Science">
        <title>The dynamics and time scale of ongoing genomic erosion in symbiotic bacteria.</title>
        <authorList>
            <person name="Moran N.A."/>
            <person name="McLaughlin H.J."/>
            <person name="Sorek R."/>
        </authorList>
    </citation>
    <scope>NUCLEOTIDE SEQUENCE [LARGE SCALE GENOMIC DNA]</scope>
    <source>
        <strain>Tuc7</strain>
    </source>
</reference>